<proteinExistence type="evidence at transcript level"/>
<name>FKBP7_PONAB</name>
<accession>Q5RET2</accession>
<dbReference type="EC" id="5.2.1.8"/>
<dbReference type="EMBL" id="CR857434">
    <property type="protein sequence ID" value="CAH89725.1"/>
    <property type="molecule type" value="mRNA"/>
</dbReference>
<dbReference type="RefSeq" id="NP_001124786.1">
    <property type="nucleotide sequence ID" value="NM_001131314.1"/>
</dbReference>
<dbReference type="SMR" id="Q5RET2"/>
<dbReference type="STRING" id="9601.ENSPPYP00000014499"/>
<dbReference type="GlyCosmos" id="Q5RET2">
    <property type="glycosylation" value="1 site, No reported glycans"/>
</dbReference>
<dbReference type="GeneID" id="100171639"/>
<dbReference type="KEGG" id="pon:100171639"/>
<dbReference type="CTD" id="51661"/>
<dbReference type="eggNOG" id="KOG0549">
    <property type="taxonomic scope" value="Eukaryota"/>
</dbReference>
<dbReference type="InParanoid" id="Q5RET2"/>
<dbReference type="OrthoDB" id="1902587at2759"/>
<dbReference type="Proteomes" id="UP000001595">
    <property type="component" value="Unplaced"/>
</dbReference>
<dbReference type="GO" id="GO:0005788">
    <property type="term" value="C:endoplasmic reticulum lumen"/>
    <property type="evidence" value="ECO:0007669"/>
    <property type="project" value="UniProtKB-SubCell"/>
</dbReference>
<dbReference type="GO" id="GO:0005509">
    <property type="term" value="F:calcium ion binding"/>
    <property type="evidence" value="ECO:0007669"/>
    <property type="project" value="InterPro"/>
</dbReference>
<dbReference type="GO" id="GO:0003755">
    <property type="term" value="F:peptidyl-prolyl cis-trans isomerase activity"/>
    <property type="evidence" value="ECO:0007669"/>
    <property type="project" value="UniProtKB-KW"/>
</dbReference>
<dbReference type="FunFam" id="3.10.50.40:FF:000006">
    <property type="entry name" value="Peptidyl-prolyl cis-trans isomerase"/>
    <property type="match status" value="1"/>
</dbReference>
<dbReference type="Gene3D" id="3.10.50.40">
    <property type="match status" value="1"/>
</dbReference>
<dbReference type="Gene3D" id="1.10.238.10">
    <property type="entry name" value="EF-hand"/>
    <property type="match status" value="1"/>
</dbReference>
<dbReference type="InterPro" id="IPR011992">
    <property type="entry name" value="EF-hand-dom_pair"/>
</dbReference>
<dbReference type="InterPro" id="IPR018247">
    <property type="entry name" value="EF_Hand_1_Ca_BS"/>
</dbReference>
<dbReference type="InterPro" id="IPR002048">
    <property type="entry name" value="EF_hand_dom"/>
</dbReference>
<dbReference type="InterPro" id="IPR046357">
    <property type="entry name" value="PPIase_dom_sf"/>
</dbReference>
<dbReference type="InterPro" id="IPR052273">
    <property type="entry name" value="PPIase_FKBP"/>
</dbReference>
<dbReference type="InterPro" id="IPR001179">
    <property type="entry name" value="PPIase_FKBP_dom"/>
</dbReference>
<dbReference type="PANTHER" id="PTHR46222:SF2">
    <property type="entry name" value="PEPTIDYL-PROLYL CIS-TRANS ISOMERASE FKBP7"/>
    <property type="match status" value="1"/>
</dbReference>
<dbReference type="PANTHER" id="PTHR46222">
    <property type="entry name" value="PEPTIDYL-PROLYL CIS-TRANS ISOMERASE FKBP7/14"/>
    <property type="match status" value="1"/>
</dbReference>
<dbReference type="Pfam" id="PF13202">
    <property type="entry name" value="EF-hand_5"/>
    <property type="match status" value="1"/>
</dbReference>
<dbReference type="Pfam" id="PF00254">
    <property type="entry name" value="FKBP_C"/>
    <property type="match status" value="1"/>
</dbReference>
<dbReference type="SUPFAM" id="SSF47473">
    <property type="entry name" value="EF-hand"/>
    <property type="match status" value="1"/>
</dbReference>
<dbReference type="SUPFAM" id="SSF54534">
    <property type="entry name" value="FKBP-like"/>
    <property type="match status" value="1"/>
</dbReference>
<dbReference type="PROSITE" id="PS00018">
    <property type="entry name" value="EF_HAND_1"/>
    <property type="match status" value="2"/>
</dbReference>
<dbReference type="PROSITE" id="PS50222">
    <property type="entry name" value="EF_HAND_2"/>
    <property type="match status" value="2"/>
</dbReference>
<dbReference type="PROSITE" id="PS00014">
    <property type="entry name" value="ER_TARGET"/>
    <property type="match status" value="1"/>
</dbReference>
<dbReference type="PROSITE" id="PS50059">
    <property type="entry name" value="FKBP_PPIASE"/>
    <property type="match status" value="1"/>
</dbReference>
<evidence type="ECO:0000250" key="1"/>
<evidence type="ECO:0000255" key="2"/>
<evidence type="ECO:0000255" key="3">
    <source>
        <dbReference type="PROSITE-ProRule" id="PRU00277"/>
    </source>
</evidence>
<evidence type="ECO:0000255" key="4">
    <source>
        <dbReference type="PROSITE-ProRule" id="PRU00448"/>
    </source>
</evidence>
<evidence type="ECO:0000255" key="5">
    <source>
        <dbReference type="PROSITE-ProRule" id="PRU10138"/>
    </source>
</evidence>
<protein>
    <recommendedName>
        <fullName>Peptidyl-prolyl cis-trans isomerase FKBP7</fullName>
        <shortName>PPIase FKBP7</shortName>
        <ecNumber>5.2.1.8</ecNumber>
    </recommendedName>
    <alternativeName>
        <fullName>FK506-binding protein 7</fullName>
        <shortName>FKBP-7</shortName>
    </alternativeName>
    <alternativeName>
        <fullName>Rotamase</fullName>
    </alternativeName>
</protein>
<keyword id="KW-0106">Calcium</keyword>
<keyword id="KW-0256">Endoplasmic reticulum</keyword>
<keyword id="KW-0325">Glycoprotein</keyword>
<keyword id="KW-0413">Isomerase</keyword>
<keyword id="KW-0479">Metal-binding</keyword>
<keyword id="KW-1185">Reference proteome</keyword>
<keyword id="KW-0677">Repeat</keyword>
<keyword id="KW-0697">Rotamase</keyword>
<keyword id="KW-0732">Signal</keyword>
<sequence>MPKTMHFLFRFIVFFYLWGLFTAQRQKKEERTEEVKIEVLHRPENCSKTSKKGDLLNAHYDGYLAKDGSKFYCSRTQNEGHPKWFVLGVGQVIKGLDIAMTDMCPGEKRKVVIPPSFAYGKEGYAEGKIPPDATLIFEIELYAVTKGPRSTETFKQIDMDSDRQLSKAEINLYLQREFEKDEKPRDKSYQDAVLEDIFKKNDHDGDGFISPKEYNVYQHDEL</sequence>
<comment type="function">
    <text>PPIases accelerate the folding of proteins during protein synthesis.</text>
</comment>
<comment type="catalytic activity">
    <reaction>
        <text>[protein]-peptidylproline (omega=180) = [protein]-peptidylproline (omega=0)</text>
        <dbReference type="Rhea" id="RHEA:16237"/>
        <dbReference type="Rhea" id="RHEA-COMP:10747"/>
        <dbReference type="Rhea" id="RHEA-COMP:10748"/>
        <dbReference type="ChEBI" id="CHEBI:83833"/>
        <dbReference type="ChEBI" id="CHEBI:83834"/>
        <dbReference type="EC" id="5.2.1.8"/>
    </reaction>
</comment>
<comment type="subcellular location">
    <subcellularLocation>
        <location evidence="5">Endoplasmic reticulum lumen</location>
    </subcellularLocation>
</comment>
<comment type="PTM">
    <text evidence="1">Glycosylated.</text>
</comment>
<comment type="miscellaneous">
    <text evidence="1">Binds calcium.</text>
</comment>
<organism>
    <name type="scientific">Pongo abelii</name>
    <name type="common">Sumatran orangutan</name>
    <name type="synonym">Pongo pygmaeus abelii</name>
    <dbReference type="NCBI Taxonomy" id="9601"/>
    <lineage>
        <taxon>Eukaryota</taxon>
        <taxon>Metazoa</taxon>
        <taxon>Chordata</taxon>
        <taxon>Craniata</taxon>
        <taxon>Vertebrata</taxon>
        <taxon>Euteleostomi</taxon>
        <taxon>Mammalia</taxon>
        <taxon>Eutheria</taxon>
        <taxon>Euarchontoglires</taxon>
        <taxon>Primates</taxon>
        <taxon>Haplorrhini</taxon>
        <taxon>Catarrhini</taxon>
        <taxon>Hominidae</taxon>
        <taxon>Pongo</taxon>
    </lineage>
</organism>
<gene>
    <name type="primary">FKBP7</name>
</gene>
<reference key="1">
    <citation type="submission" date="2004-11" db="EMBL/GenBank/DDBJ databases">
        <authorList>
            <consortium name="The German cDNA consortium"/>
        </authorList>
    </citation>
    <scope>NUCLEOTIDE SEQUENCE [LARGE SCALE MRNA]</scope>
    <source>
        <tissue>Kidney</tissue>
    </source>
</reference>
<feature type="signal peptide" evidence="2">
    <location>
        <begin position="1"/>
        <end position="23"/>
    </location>
</feature>
<feature type="chain" id="PRO_0000025515" description="Peptidyl-prolyl cis-trans isomerase FKBP7">
    <location>
        <begin position="24"/>
        <end position="222"/>
    </location>
</feature>
<feature type="domain" description="PPIase FKBP-type" evidence="3">
    <location>
        <begin position="53"/>
        <end position="145"/>
    </location>
</feature>
<feature type="domain" description="EF-hand 1" evidence="4">
    <location>
        <begin position="145"/>
        <end position="180"/>
    </location>
</feature>
<feature type="domain" description="EF-hand 2" evidence="4">
    <location>
        <begin position="189"/>
        <end position="222"/>
    </location>
</feature>
<feature type="short sequence motif" description="Prevents secretion from ER" evidence="5">
    <location>
        <begin position="219"/>
        <end position="222"/>
    </location>
</feature>
<feature type="binding site" evidence="4">
    <location>
        <position position="158"/>
    </location>
    <ligand>
        <name>Ca(2+)</name>
        <dbReference type="ChEBI" id="CHEBI:29108"/>
        <label>1</label>
    </ligand>
</feature>
<feature type="binding site" evidence="4">
    <location>
        <position position="160"/>
    </location>
    <ligand>
        <name>Ca(2+)</name>
        <dbReference type="ChEBI" id="CHEBI:29108"/>
        <label>1</label>
    </ligand>
</feature>
<feature type="binding site" evidence="4">
    <location>
        <position position="162"/>
    </location>
    <ligand>
        <name>Ca(2+)</name>
        <dbReference type="ChEBI" id="CHEBI:29108"/>
        <label>1</label>
    </ligand>
</feature>
<feature type="binding site" evidence="4">
    <location>
        <position position="164"/>
    </location>
    <ligand>
        <name>Ca(2+)</name>
        <dbReference type="ChEBI" id="CHEBI:29108"/>
        <label>1</label>
    </ligand>
</feature>
<feature type="binding site" evidence="4">
    <location>
        <position position="169"/>
    </location>
    <ligand>
        <name>Ca(2+)</name>
        <dbReference type="ChEBI" id="CHEBI:29108"/>
        <label>1</label>
    </ligand>
</feature>
<feature type="binding site" evidence="4">
    <location>
        <position position="202"/>
    </location>
    <ligand>
        <name>Ca(2+)</name>
        <dbReference type="ChEBI" id="CHEBI:29108"/>
        <label>2</label>
    </ligand>
</feature>
<feature type="binding site" evidence="4">
    <location>
        <position position="204"/>
    </location>
    <ligand>
        <name>Ca(2+)</name>
        <dbReference type="ChEBI" id="CHEBI:29108"/>
        <label>2</label>
    </ligand>
</feature>
<feature type="binding site" evidence="4">
    <location>
        <position position="206"/>
    </location>
    <ligand>
        <name>Ca(2+)</name>
        <dbReference type="ChEBI" id="CHEBI:29108"/>
        <label>2</label>
    </ligand>
</feature>
<feature type="binding site" evidence="4">
    <location>
        <position position="213"/>
    </location>
    <ligand>
        <name>Ca(2+)</name>
        <dbReference type="ChEBI" id="CHEBI:29108"/>
        <label>2</label>
    </ligand>
</feature>
<feature type="glycosylation site" description="N-linked (GlcNAc...) asparagine" evidence="2">
    <location>
        <position position="45"/>
    </location>
</feature>